<evidence type="ECO:0000255" key="1">
    <source>
        <dbReference type="HAMAP-Rule" id="MF_01458"/>
    </source>
</evidence>
<comment type="function">
    <text evidence="1">Acts as a processive, ATP-dependent zinc metallopeptidase for both cytoplasmic and membrane proteins. Plays a role in the quality control of integral membrane proteins.</text>
</comment>
<comment type="cofactor">
    <cofactor evidence="1">
        <name>Zn(2+)</name>
        <dbReference type="ChEBI" id="CHEBI:29105"/>
    </cofactor>
    <text evidence="1">Binds 1 zinc ion per subunit.</text>
</comment>
<comment type="subunit">
    <text evidence="1">Homohexamer.</text>
</comment>
<comment type="subcellular location">
    <subcellularLocation>
        <location evidence="1">Cell membrane</location>
        <topology evidence="1">Multi-pass membrane protein</topology>
        <orientation evidence="1">Cytoplasmic side</orientation>
    </subcellularLocation>
</comment>
<comment type="similarity">
    <text evidence="1">In the central section; belongs to the AAA ATPase family.</text>
</comment>
<comment type="similarity">
    <text evidence="1">In the C-terminal section; belongs to the peptidase M41 family.</text>
</comment>
<name>FTSH2_SPHTD</name>
<feature type="chain" id="PRO_5000537656" description="ATP-dependent zinc metalloprotease FtsH 2">
    <location>
        <begin position="1"/>
        <end position="652"/>
    </location>
</feature>
<feature type="topological domain" description="Cytoplasmic" evidence="1">
    <location>
        <begin position="1"/>
        <end position="6"/>
    </location>
</feature>
<feature type="transmembrane region" description="Helical" evidence="1">
    <location>
        <begin position="7"/>
        <end position="27"/>
    </location>
</feature>
<feature type="topological domain" description="Extracellular" evidence="1">
    <location>
        <begin position="28"/>
        <end position="108"/>
    </location>
</feature>
<feature type="transmembrane region" description="Helical" evidence="1">
    <location>
        <begin position="109"/>
        <end position="129"/>
    </location>
</feature>
<feature type="topological domain" description="Cytoplasmic" evidence="1">
    <location>
        <begin position="130"/>
        <end position="652"/>
    </location>
</feature>
<feature type="active site" evidence="1">
    <location>
        <position position="421"/>
    </location>
</feature>
<feature type="binding site" evidence="1">
    <location>
        <begin position="200"/>
        <end position="207"/>
    </location>
    <ligand>
        <name>ATP</name>
        <dbReference type="ChEBI" id="CHEBI:30616"/>
    </ligand>
</feature>
<feature type="binding site" evidence="1">
    <location>
        <position position="420"/>
    </location>
    <ligand>
        <name>Zn(2+)</name>
        <dbReference type="ChEBI" id="CHEBI:29105"/>
        <note>catalytic</note>
    </ligand>
</feature>
<feature type="binding site" evidence="1">
    <location>
        <position position="424"/>
    </location>
    <ligand>
        <name>Zn(2+)</name>
        <dbReference type="ChEBI" id="CHEBI:29105"/>
        <note>catalytic</note>
    </ligand>
</feature>
<feature type="binding site" evidence="1">
    <location>
        <position position="496"/>
    </location>
    <ligand>
        <name>Zn(2+)</name>
        <dbReference type="ChEBI" id="CHEBI:29105"/>
        <note>catalytic</note>
    </ligand>
</feature>
<sequence length="652" mass="71203">MNKYRRGLALGALALAVFILIGVGISMRATPQPVNLTQVLTDIRDGRVTEIHLANDGQAAEVTYTDESKTRVALPAGESLTTLLTDAGIPVERWPDIYPAGNGAISADLMLLLRILTIVAVGVVIFVLFRRFGPSSIGTTPTRRGSFEPIRPGERVITFDDVAGAEEVKEEVADIVDYLRDPERFRRLGARIPRGVLLTGPPGTGKTLLTRALAGEARASFFSVSGSEFVELYVGVGASRVRELFRKAKENAPAIIFIDEIDAIGRRRGRMEQSSEYDQTLNQILVEMDGFEERTTVVVVAATNRVDILDPALLRPGRFDRKVVVDLPDRKARRAILEVHARGKPLAENVNLDELAARTTGMTGADLANVINEAAILAARDRRETITNQDLLEALDRTLAGPARNARRFSERERRVVAYHEAGHAVVAHLLPHADPVRKVSIVSRGRAGGYTMIVPDEDRGLWTRAQLSDRLAALLGGLAAEELIFGDITTGSSNDLEQTTAIATSMVQRYGMGKRFGLLSTGAGSDLQQLSPQSAYTAEQEALELVQQAHQVALDVLRAHADDLERVAQRLLEVETIDGEELETLISPPRQLPVRRPVEQALPTPLHRAPIREGRRKGSAHRVGRAIGLVASFTRDAVESLRAAKPQIDRT</sequence>
<reference key="1">
    <citation type="submission" date="2009-11" db="EMBL/GenBank/DDBJ databases">
        <title>The complete chromosome 1 of Sphaerobacter thermophilus DSM 20745.</title>
        <authorList>
            <person name="Lucas S."/>
            <person name="Copeland A."/>
            <person name="Lapidus A."/>
            <person name="Glavina del Rio T."/>
            <person name="Dalin E."/>
            <person name="Tice H."/>
            <person name="Bruce D."/>
            <person name="Goodwin L."/>
            <person name="Pitluck S."/>
            <person name="Kyrpides N."/>
            <person name="Mavromatis K."/>
            <person name="Ivanova N."/>
            <person name="Mikhailova N."/>
            <person name="LaButti K.M."/>
            <person name="Clum A."/>
            <person name="Sun H.I."/>
            <person name="Brettin T."/>
            <person name="Detter J.C."/>
            <person name="Han C."/>
            <person name="Larimer F."/>
            <person name="Land M."/>
            <person name="Hauser L."/>
            <person name="Markowitz V."/>
            <person name="Cheng J.F."/>
            <person name="Hugenholtz P."/>
            <person name="Woyke T."/>
            <person name="Wu D."/>
            <person name="Steenblock K."/>
            <person name="Schneider S."/>
            <person name="Pukall R."/>
            <person name="Goeker M."/>
            <person name="Klenk H.P."/>
            <person name="Eisen J.A."/>
        </authorList>
    </citation>
    <scope>NUCLEOTIDE SEQUENCE [LARGE SCALE GENOMIC DNA]</scope>
    <source>
        <strain>ATCC 49802 / DSM 20745 / KCCM 41009 / NCIMB 13125 / S 6022</strain>
    </source>
</reference>
<protein>
    <recommendedName>
        <fullName evidence="1">ATP-dependent zinc metalloprotease FtsH 2</fullName>
        <ecNumber evidence="1">3.4.24.-</ecNumber>
    </recommendedName>
</protein>
<accession>D1C2C6</accession>
<organism>
    <name type="scientific">Sphaerobacter thermophilus (strain ATCC 49802 / DSM 20745 / KCCM 41009 / NCIMB 13125 / S 6022)</name>
    <dbReference type="NCBI Taxonomy" id="479434"/>
    <lineage>
        <taxon>Bacteria</taxon>
        <taxon>Pseudomonadati</taxon>
        <taxon>Thermomicrobiota</taxon>
        <taxon>Thermomicrobia</taxon>
        <taxon>Sphaerobacterales</taxon>
        <taxon>Sphaerobacterineae</taxon>
        <taxon>Sphaerobacteraceae</taxon>
        <taxon>Sphaerobacter</taxon>
    </lineage>
</organism>
<dbReference type="EC" id="3.4.24.-" evidence="1"/>
<dbReference type="EMBL" id="CP001823">
    <property type="protein sequence ID" value="ACZ38393.1"/>
    <property type="molecule type" value="Genomic_DNA"/>
</dbReference>
<dbReference type="RefSeq" id="WP_012871440.1">
    <property type="nucleotide sequence ID" value="NC_013523.1"/>
</dbReference>
<dbReference type="SMR" id="D1C2C6"/>
<dbReference type="STRING" id="479434.Sthe_0956"/>
<dbReference type="KEGG" id="sti:Sthe_0956"/>
<dbReference type="eggNOG" id="COG0465">
    <property type="taxonomic scope" value="Bacteria"/>
</dbReference>
<dbReference type="HOGENOM" id="CLU_000688_16_2_0"/>
<dbReference type="InParanoid" id="D1C2C6"/>
<dbReference type="OrthoDB" id="9809379at2"/>
<dbReference type="Proteomes" id="UP000002027">
    <property type="component" value="Chromosome 1"/>
</dbReference>
<dbReference type="GO" id="GO:0005886">
    <property type="term" value="C:plasma membrane"/>
    <property type="evidence" value="ECO:0007669"/>
    <property type="project" value="UniProtKB-SubCell"/>
</dbReference>
<dbReference type="GO" id="GO:0005524">
    <property type="term" value="F:ATP binding"/>
    <property type="evidence" value="ECO:0007669"/>
    <property type="project" value="UniProtKB-UniRule"/>
</dbReference>
<dbReference type="GO" id="GO:0016887">
    <property type="term" value="F:ATP hydrolysis activity"/>
    <property type="evidence" value="ECO:0007669"/>
    <property type="project" value="UniProtKB-UniRule"/>
</dbReference>
<dbReference type="GO" id="GO:0004176">
    <property type="term" value="F:ATP-dependent peptidase activity"/>
    <property type="evidence" value="ECO:0007669"/>
    <property type="project" value="InterPro"/>
</dbReference>
<dbReference type="GO" id="GO:0004222">
    <property type="term" value="F:metalloendopeptidase activity"/>
    <property type="evidence" value="ECO:0007669"/>
    <property type="project" value="InterPro"/>
</dbReference>
<dbReference type="GO" id="GO:0008270">
    <property type="term" value="F:zinc ion binding"/>
    <property type="evidence" value="ECO:0007669"/>
    <property type="project" value="UniProtKB-UniRule"/>
</dbReference>
<dbReference type="GO" id="GO:0030163">
    <property type="term" value="P:protein catabolic process"/>
    <property type="evidence" value="ECO:0007669"/>
    <property type="project" value="UniProtKB-UniRule"/>
</dbReference>
<dbReference type="GO" id="GO:0006508">
    <property type="term" value="P:proteolysis"/>
    <property type="evidence" value="ECO:0007669"/>
    <property type="project" value="UniProtKB-KW"/>
</dbReference>
<dbReference type="CDD" id="cd19501">
    <property type="entry name" value="RecA-like_FtsH"/>
    <property type="match status" value="1"/>
</dbReference>
<dbReference type="FunFam" id="1.10.8.60:FF:000001">
    <property type="entry name" value="ATP-dependent zinc metalloprotease FtsH"/>
    <property type="match status" value="1"/>
</dbReference>
<dbReference type="FunFam" id="1.20.58.760:FF:000001">
    <property type="entry name" value="ATP-dependent zinc metalloprotease FtsH"/>
    <property type="match status" value="1"/>
</dbReference>
<dbReference type="FunFam" id="3.40.50.300:FF:000001">
    <property type="entry name" value="ATP-dependent zinc metalloprotease FtsH"/>
    <property type="match status" value="1"/>
</dbReference>
<dbReference type="Gene3D" id="1.10.8.60">
    <property type="match status" value="1"/>
</dbReference>
<dbReference type="Gene3D" id="3.40.50.300">
    <property type="entry name" value="P-loop containing nucleotide triphosphate hydrolases"/>
    <property type="match status" value="1"/>
</dbReference>
<dbReference type="Gene3D" id="1.20.58.760">
    <property type="entry name" value="Peptidase M41"/>
    <property type="match status" value="1"/>
</dbReference>
<dbReference type="HAMAP" id="MF_01458">
    <property type="entry name" value="FtsH"/>
    <property type="match status" value="1"/>
</dbReference>
<dbReference type="InterPro" id="IPR003593">
    <property type="entry name" value="AAA+_ATPase"/>
</dbReference>
<dbReference type="InterPro" id="IPR041569">
    <property type="entry name" value="AAA_lid_3"/>
</dbReference>
<dbReference type="InterPro" id="IPR003959">
    <property type="entry name" value="ATPase_AAA_core"/>
</dbReference>
<dbReference type="InterPro" id="IPR003960">
    <property type="entry name" value="ATPase_AAA_CS"/>
</dbReference>
<dbReference type="InterPro" id="IPR005936">
    <property type="entry name" value="FtsH"/>
</dbReference>
<dbReference type="InterPro" id="IPR027417">
    <property type="entry name" value="P-loop_NTPase"/>
</dbReference>
<dbReference type="InterPro" id="IPR000642">
    <property type="entry name" value="Peptidase_M41"/>
</dbReference>
<dbReference type="InterPro" id="IPR037219">
    <property type="entry name" value="Peptidase_M41-like"/>
</dbReference>
<dbReference type="NCBIfam" id="TIGR01241">
    <property type="entry name" value="FtsH_fam"/>
    <property type="match status" value="1"/>
</dbReference>
<dbReference type="PANTHER" id="PTHR23076:SF97">
    <property type="entry name" value="ATP-DEPENDENT ZINC METALLOPROTEASE YME1L1"/>
    <property type="match status" value="1"/>
</dbReference>
<dbReference type="PANTHER" id="PTHR23076">
    <property type="entry name" value="METALLOPROTEASE M41 FTSH"/>
    <property type="match status" value="1"/>
</dbReference>
<dbReference type="Pfam" id="PF00004">
    <property type="entry name" value="AAA"/>
    <property type="match status" value="1"/>
</dbReference>
<dbReference type="Pfam" id="PF17862">
    <property type="entry name" value="AAA_lid_3"/>
    <property type="match status" value="1"/>
</dbReference>
<dbReference type="Pfam" id="PF01434">
    <property type="entry name" value="Peptidase_M41"/>
    <property type="match status" value="1"/>
</dbReference>
<dbReference type="SMART" id="SM00382">
    <property type="entry name" value="AAA"/>
    <property type="match status" value="1"/>
</dbReference>
<dbReference type="SUPFAM" id="SSF140990">
    <property type="entry name" value="FtsH protease domain-like"/>
    <property type="match status" value="1"/>
</dbReference>
<dbReference type="SUPFAM" id="SSF52540">
    <property type="entry name" value="P-loop containing nucleoside triphosphate hydrolases"/>
    <property type="match status" value="1"/>
</dbReference>
<dbReference type="PROSITE" id="PS00674">
    <property type="entry name" value="AAA"/>
    <property type="match status" value="1"/>
</dbReference>
<gene>
    <name evidence="1" type="primary">ftsH2</name>
    <name type="ordered locus">Sthe_0956</name>
</gene>
<keyword id="KW-0067">ATP-binding</keyword>
<keyword id="KW-1003">Cell membrane</keyword>
<keyword id="KW-0378">Hydrolase</keyword>
<keyword id="KW-0472">Membrane</keyword>
<keyword id="KW-0479">Metal-binding</keyword>
<keyword id="KW-0482">Metalloprotease</keyword>
<keyword id="KW-0547">Nucleotide-binding</keyword>
<keyword id="KW-0645">Protease</keyword>
<keyword id="KW-1185">Reference proteome</keyword>
<keyword id="KW-0812">Transmembrane</keyword>
<keyword id="KW-1133">Transmembrane helix</keyword>
<keyword id="KW-0862">Zinc</keyword>
<proteinExistence type="inferred from homology"/>